<organism>
    <name type="scientific">Oryza sativa subsp. japonica</name>
    <name type="common">Rice</name>
    <dbReference type="NCBI Taxonomy" id="39947"/>
    <lineage>
        <taxon>Eukaryota</taxon>
        <taxon>Viridiplantae</taxon>
        <taxon>Streptophyta</taxon>
        <taxon>Embryophyta</taxon>
        <taxon>Tracheophyta</taxon>
        <taxon>Spermatophyta</taxon>
        <taxon>Magnoliopsida</taxon>
        <taxon>Liliopsida</taxon>
        <taxon>Poales</taxon>
        <taxon>Poaceae</taxon>
        <taxon>BOP clade</taxon>
        <taxon>Oryzoideae</taxon>
        <taxon>Oryzeae</taxon>
        <taxon>Oryzinae</taxon>
        <taxon>Oryza</taxon>
        <taxon>Oryza sativa</taxon>
    </lineage>
</organism>
<gene>
    <name type="primary">GAPC3</name>
    <name type="synonym">GAPDH</name>
    <name type="ordered locus">Os02g0601300</name>
    <name type="ordered locus">LOC_Os02g38920</name>
    <name type="ORF">OJ1791_B03.34</name>
    <name type="ORF">OsJ_07411</name>
</gene>
<comment type="function">
    <text evidence="1">Key enzyme in glycolysis that catalyzes the first step of the pathway by converting D-glyceraldehyde 3-phosphate (G3P) into 3-phospho-D-glyceroyl phosphate. Essential for the maintenance of cellular ATP levels and carbohydrate metabolism (By similarity).</text>
</comment>
<comment type="catalytic activity">
    <reaction evidence="2">
        <text>D-glyceraldehyde 3-phosphate + phosphate + NAD(+) = (2R)-3-phospho-glyceroyl phosphate + NADH + H(+)</text>
        <dbReference type="Rhea" id="RHEA:10300"/>
        <dbReference type="ChEBI" id="CHEBI:15378"/>
        <dbReference type="ChEBI" id="CHEBI:43474"/>
        <dbReference type="ChEBI" id="CHEBI:57540"/>
        <dbReference type="ChEBI" id="CHEBI:57604"/>
        <dbReference type="ChEBI" id="CHEBI:57945"/>
        <dbReference type="ChEBI" id="CHEBI:59776"/>
        <dbReference type="EC" id="1.2.1.12"/>
    </reaction>
</comment>
<comment type="pathway">
    <text>Carbohydrate degradation; glycolysis; pyruvate from D-glyceraldehyde 3-phosphate: step 1/5.</text>
</comment>
<comment type="subunit">
    <text evidence="1">Homotetramer.</text>
</comment>
<comment type="subcellular location">
    <subcellularLocation>
        <location evidence="1">Cytoplasm</location>
    </subcellularLocation>
</comment>
<comment type="miscellaneous">
    <text>Plants contain two types of GAPDH: cytosolic forms which participate in glycolysis and chloroplast forms which participate in photosynthesis. All the forms are encoded by distinct genes.</text>
</comment>
<comment type="similarity">
    <text evidence="3">Belongs to the glyceraldehyde-3-phosphate dehydrogenase family.</text>
</comment>
<sequence length="337" mass="36568">MGKIKIGINGFGRIGRLVARVALQSEDVELVAVNDPFITTEYMTYMFKYDTVHGQWKHHEVKVKDSKTLIFGTKEVAVFGCRNPEEIPWAAAGAEYVVESTGVFTDKDKAAAHLKGGAKKVVISAPSKDAPMFVVGVNEKEYKSDVNIVSNASCTTNCLAPLAKVINDRFGIVEGLMTTVHAITATQKTVDGPSMKDWRGGRAASFNIIPSSTGAAKAVGKVLPALNGKLTGMAFRVPTVDVSVVDLTVRLEKPASYDQIKAAIKEEAEGKLKGILGYVEEDLVSTDFQGDSRSSIFDAKAGIALSDTFVKLVSWYDNEWGYSTRVIDLIRHMHSTN</sequence>
<name>G3PC3_ORYSJ</name>
<evidence type="ECO:0000250" key="1"/>
<evidence type="ECO:0000255" key="2">
    <source>
        <dbReference type="PROSITE-ProRule" id="PRU10009"/>
    </source>
</evidence>
<evidence type="ECO:0000305" key="3"/>
<reference key="1">
    <citation type="submission" date="2009-08" db="EMBL/GenBank/DDBJ databases">
        <title>Structural and expression analysis of germinating seed genes in Oryza sativa L.</title>
        <authorList>
            <person name="Yoon U.H."/>
            <person name="Kim Y.H."/>
        </authorList>
    </citation>
    <scope>NUCLEOTIDE SEQUENCE [MRNA]</scope>
    <source>
        <strain>cv. Ilpoombyeo</strain>
        <tissue>Seed</tissue>
    </source>
</reference>
<reference key="2">
    <citation type="journal article" date="2005" name="Nature">
        <title>The map-based sequence of the rice genome.</title>
        <authorList>
            <consortium name="International rice genome sequencing project (IRGSP)"/>
        </authorList>
    </citation>
    <scope>NUCLEOTIDE SEQUENCE [LARGE SCALE GENOMIC DNA]</scope>
    <source>
        <strain>cv. Nipponbare</strain>
    </source>
</reference>
<reference key="3">
    <citation type="journal article" date="2008" name="Nucleic Acids Res.">
        <title>The rice annotation project database (RAP-DB): 2008 update.</title>
        <authorList>
            <consortium name="The rice annotation project (RAP)"/>
        </authorList>
    </citation>
    <scope>GENOME REANNOTATION</scope>
    <source>
        <strain>cv. Nipponbare</strain>
    </source>
</reference>
<reference key="4">
    <citation type="journal article" date="2013" name="Rice">
        <title>Improvement of the Oryza sativa Nipponbare reference genome using next generation sequence and optical map data.</title>
        <authorList>
            <person name="Kawahara Y."/>
            <person name="de la Bastide M."/>
            <person name="Hamilton J.P."/>
            <person name="Kanamori H."/>
            <person name="McCombie W.R."/>
            <person name="Ouyang S."/>
            <person name="Schwartz D.C."/>
            <person name="Tanaka T."/>
            <person name="Wu J."/>
            <person name="Zhou S."/>
            <person name="Childs K.L."/>
            <person name="Davidson R.M."/>
            <person name="Lin H."/>
            <person name="Quesada-Ocampo L."/>
            <person name="Vaillancourt B."/>
            <person name="Sakai H."/>
            <person name="Lee S.S."/>
            <person name="Kim J."/>
            <person name="Numa H."/>
            <person name="Itoh T."/>
            <person name="Buell C.R."/>
            <person name="Matsumoto T."/>
        </authorList>
    </citation>
    <scope>GENOME REANNOTATION</scope>
    <source>
        <strain>cv. Nipponbare</strain>
    </source>
</reference>
<reference key="5">
    <citation type="journal article" date="2005" name="PLoS Biol.">
        <title>The genomes of Oryza sativa: a history of duplications.</title>
        <authorList>
            <person name="Yu J."/>
            <person name="Wang J."/>
            <person name="Lin W."/>
            <person name="Li S."/>
            <person name="Li H."/>
            <person name="Zhou J."/>
            <person name="Ni P."/>
            <person name="Dong W."/>
            <person name="Hu S."/>
            <person name="Zeng C."/>
            <person name="Zhang J."/>
            <person name="Zhang Y."/>
            <person name="Li R."/>
            <person name="Xu Z."/>
            <person name="Li S."/>
            <person name="Li X."/>
            <person name="Zheng H."/>
            <person name="Cong L."/>
            <person name="Lin L."/>
            <person name="Yin J."/>
            <person name="Geng J."/>
            <person name="Li G."/>
            <person name="Shi J."/>
            <person name="Liu J."/>
            <person name="Lv H."/>
            <person name="Li J."/>
            <person name="Wang J."/>
            <person name="Deng Y."/>
            <person name="Ran L."/>
            <person name="Shi X."/>
            <person name="Wang X."/>
            <person name="Wu Q."/>
            <person name="Li C."/>
            <person name="Ren X."/>
            <person name="Wang J."/>
            <person name="Wang X."/>
            <person name="Li D."/>
            <person name="Liu D."/>
            <person name="Zhang X."/>
            <person name="Ji Z."/>
            <person name="Zhao W."/>
            <person name="Sun Y."/>
            <person name="Zhang Z."/>
            <person name="Bao J."/>
            <person name="Han Y."/>
            <person name="Dong L."/>
            <person name="Ji J."/>
            <person name="Chen P."/>
            <person name="Wu S."/>
            <person name="Liu J."/>
            <person name="Xiao Y."/>
            <person name="Bu D."/>
            <person name="Tan J."/>
            <person name="Yang L."/>
            <person name="Ye C."/>
            <person name="Zhang J."/>
            <person name="Xu J."/>
            <person name="Zhou Y."/>
            <person name="Yu Y."/>
            <person name="Zhang B."/>
            <person name="Zhuang S."/>
            <person name="Wei H."/>
            <person name="Liu B."/>
            <person name="Lei M."/>
            <person name="Yu H."/>
            <person name="Li Y."/>
            <person name="Xu H."/>
            <person name="Wei S."/>
            <person name="He X."/>
            <person name="Fang L."/>
            <person name="Zhang Z."/>
            <person name="Zhang Y."/>
            <person name="Huang X."/>
            <person name="Su Z."/>
            <person name="Tong W."/>
            <person name="Li J."/>
            <person name="Tong Z."/>
            <person name="Li S."/>
            <person name="Ye J."/>
            <person name="Wang L."/>
            <person name="Fang L."/>
            <person name="Lei T."/>
            <person name="Chen C.-S."/>
            <person name="Chen H.-C."/>
            <person name="Xu Z."/>
            <person name="Li H."/>
            <person name="Huang H."/>
            <person name="Zhang F."/>
            <person name="Xu H."/>
            <person name="Li N."/>
            <person name="Zhao C."/>
            <person name="Li S."/>
            <person name="Dong L."/>
            <person name="Huang Y."/>
            <person name="Li L."/>
            <person name="Xi Y."/>
            <person name="Qi Q."/>
            <person name="Li W."/>
            <person name="Zhang B."/>
            <person name="Hu W."/>
            <person name="Zhang Y."/>
            <person name="Tian X."/>
            <person name="Jiao Y."/>
            <person name="Liang X."/>
            <person name="Jin J."/>
            <person name="Gao L."/>
            <person name="Zheng W."/>
            <person name="Hao B."/>
            <person name="Liu S.-M."/>
            <person name="Wang W."/>
            <person name="Yuan L."/>
            <person name="Cao M."/>
            <person name="McDermott J."/>
            <person name="Samudrala R."/>
            <person name="Wang J."/>
            <person name="Wong G.K.-S."/>
            <person name="Yang H."/>
        </authorList>
    </citation>
    <scope>NUCLEOTIDE SEQUENCE [LARGE SCALE GENOMIC DNA]</scope>
    <source>
        <strain>cv. Nipponbare</strain>
    </source>
</reference>
<reference key="6">
    <citation type="journal article" date="2003" name="Science">
        <title>Collection, mapping, and annotation of over 28,000 cDNA clones from japonica rice.</title>
        <authorList>
            <consortium name="The rice full-length cDNA consortium"/>
        </authorList>
    </citation>
    <scope>NUCLEOTIDE SEQUENCE [LARGE SCALE MRNA]</scope>
    <source>
        <strain>cv. Nipponbare</strain>
    </source>
</reference>
<accession>Q6K5G8</accession>
<accession>A0A0P0VLA9</accession>
<feature type="chain" id="PRO_0000420732" description="Glyceraldehyde-3-phosphate dehydrogenase 3, cytosolic">
    <location>
        <begin position="1"/>
        <end position="337"/>
    </location>
</feature>
<feature type="active site" description="Nucleophile" evidence="2">
    <location>
        <position position="154"/>
    </location>
</feature>
<feature type="binding site" evidence="1">
    <location>
        <begin position="13"/>
        <end position="14"/>
    </location>
    <ligand>
        <name>NAD(+)</name>
        <dbReference type="ChEBI" id="CHEBI:57540"/>
    </ligand>
</feature>
<feature type="binding site" evidence="1">
    <location>
        <position position="35"/>
    </location>
    <ligand>
        <name>NAD(+)</name>
        <dbReference type="ChEBI" id="CHEBI:57540"/>
    </ligand>
</feature>
<feature type="binding site" evidence="1">
    <location>
        <position position="82"/>
    </location>
    <ligand>
        <name>NAD(+)</name>
        <dbReference type="ChEBI" id="CHEBI:57540"/>
    </ligand>
</feature>
<feature type="binding site" evidence="1">
    <location>
        <begin position="153"/>
        <end position="155"/>
    </location>
    <ligand>
        <name>D-glyceraldehyde 3-phosphate</name>
        <dbReference type="ChEBI" id="CHEBI:59776"/>
    </ligand>
</feature>
<feature type="binding site" evidence="1">
    <location>
        <position position="184"/>
    </location>
    <ligand>
        <name>D-glyceraldehyde 3-phosphate</name>
        <dbReference type="ChEBI" id="CHEBI:59776"/>
    </ligand>
</feature>
<feature type="binding site" evidence="1">
    <location>
        <begin position="213"/>
        <end position="214"/>
    </location>
    <ligand>
        <name>D-glyceraldehyde 3-phosphate</name>
        <dbReference type="ChEBI" id="CHEBI:59776"/>
    </ligand>
</feature>
<feature type="binding site" evidence="1">
    <location>
        <position position="236"/>
    </location>
    <ligand>
        <name>D-glyceraldehyde 3-phosphate</name>
        <dbReference type="ChEBI" id="CHEBI:59776"/>
    </ligand>
</feature>
<feature type="binding site" evidence="1">
    <location>
        <position position="318"/>
    </location>
    <ligand>
        <name>NAD(+)</name>
        <dbReference type="ChEBI" id="CHEBI:57540"/>
    </ligand>
</feature>
<feature type="site" description="Activates thiol group during catalysis" evidence="1">
    <location>
        <position position="181"/>
    </location>
</feature>
<protein>
    <recommendedName>
        <fullName>Glyceraldehyde-3-phosphate dehydrogenase 3, cytosolic</fullName>
        <ecNumber>1.2.1.12</ecNumber>
    </recommendedName>
</protein>
<dbReference type="EC" id="1.2.1.12"/>
<dbReference type="EMBL" id="GQ848032">
    <property type="protein sequence ID" value="ADM86845.1"/>
    <property type="molecule type" value="mRNA"/>
</dbReference>
<dbReference type="EMBL" id="AP005385">
    <property type="protein sequence ID" value="BAD22157.1"/>
    <property type="molecule type" value="Genomic_DNA"/>
</dbReference>
<dbReference type="EMBL" id="AP008208">
    <property type="protein sequence ID" value="BAF09262.1"/>
    <property type="molecule type" value="Genomic_DNA"/>
</dbReference>
<dbReference type="EMBL" id="AP014958">
    <property type="protein sequence ID" value="BAS79611.1"/>
    <property type="molecule type" value="Genomic_DNA"/>
</dbReference>
<dbReference type="EMBL" id="CM000139">
    <property type="protein sequence ID" value="EEE57317.1"/>
    <property type="molecule type" value="Genomic_DNA"/>
</dbReference>
<dbReference type="EMBL" id="AK099086">
    <property type="protein sequence ID" value="BAG93915.1"/>
    <property type="molecule type" value="mRNA"/>
</dbReference>
<dbReference type="RefSeq" id="XP_015625382.1">
    <property type="nucleotide sequence ID" value="XM_015769896.1"/>
</dbReference>
<dbReference type="SMR" id="Q6K5G8"/>
<dbReference type="BioGRID" id="798929">
    <property type="interactions" value="1"/>
</dbReference>
<dbReference type="FunCoup" id="Q6K5G8">
    <property type="interactions" value="982"/>
</dbReference>
<dbReference type="STRING" id="39947.Q6K5G8"/>
<dbReference type="PaxDb" id="39947-Q6K5G8"/>
<dbReference type="EnsemblPlants" id="Os02t0601300-01">
    <property type="protein sequence ID" value="Os02t0601300-01"/>
    <property type="gene ID" value="Os02g0601300"/>
</dbReference>
<dbReference type="Gramene" id="Os02t0601300-01">
    <property type="protein sequence ID" value="Os02t0601300-01"/>
    <property type="gene ID" value="Os02g0601300"/>
</dbReference>
<dbReference type="KEGG" id="dosa:Os02g0601300"/>
<dbReference type="eggNOG" id="KOG0657">
    <property type="taxonomic scope" value="Eukaryota"/>
</dbReference>
<dbReference type="HOGENOM" id="CLU_030140_0_3_1"/>
<dbReference type="InParanoid" id="Q6K5G8"/>
<dbReference type="OMA" id="FMAHMAC"/>
<dbReference type="OrthoDB" id="1152826at2759"/>
<dbReference type="PlantReactome" id="R-OSA-1119273">
    <property type="pathway name" value="Lysine biosynthesis I"/>
</dbReference>
<dbReference type="PlantReactome" id="R-OSA-1119283">
    <property type="pathway name" value="Lysine biosynthesis II"/>
</dbReference>
<dbReference type="UniPathway" id="UPA00109">
    <property type="reaction ID" value="UER00184"/>
</dbReference>
<dbReference type="Proteomes" id="UP000000763">
    <property type="component" value="Chromosome 2"/>
</dbReference>
<dbReference type="Proteomes" id="UP000007752">
    <property type="component" value="Chromosome 2"/>
</dbReference>
<dbReference type="Proteomes" id="UP000059680">
    <property type="component" value="Chromosome 2"/>
</dbReference>
<dbReference type="ExpressionAtlas" id="Q6K5G8">
    <property type="expression patterns" value="baseline and differential"/>
</dbReference>
<dbReference type="GO" id="GO:0005829">
    <property type="term" value="C:cytosol"/>
    <property type="evidence" value="ECO:0000318"/>
    <property type="project" value="GO_Central"/>
</dbReference>
<dbReference type="GO" id="GO:0004365">
    <property type="term" value="F:glyceraldehyde-3-phosphate dehydrogenase (NAD+) (phosphorylating) activity"/>
    <property type="evidence" value="ECO:0000318"/>
    <property type="project" value="GO_Central"/>
</dbReference>
<dbReference type="GO" id="GO:0051287">
    <property type="term" value="F:NAD binding"/>
    <property type="evidence" value="ECO:0007669"/>
    <property type="project" value="InterPro"/>
</dbReference>
<dbReference type="GO" id="GO:0050661">
    <property type="term" value="F:NADP binding"/>
    <property type="evidence" value="ECO:0007669"/>
    <property type="project" value="InterPro"/>
</dbReference>
<dbReference type="GO" id="GO:0006006">
    <property type="term" value="P:glucose metabolic process"/>
    <property type="evidence" value="ECO:0007669"/>
    <property type="project" value="InterPro"/>
</dbReference>
<dbReference type="GO" id="GO:0006096">
    <property type="term" value="P:glycolytic process"/>
    <property type="evidence" value="ECO:0000318"/>
    <property type="project" value="GO_Central"/>
</dbReference>
<dbReference type="CDD" id="cd18126">
    <property type="entry name" value="GAPDH_I_C"/>
    <property type="match status" value="1"/>
</dbReference>
<dbReference type="CDD" id="cd05214">
    <property type="entry name" value="GAPDH_I_N"/>
    <property type="match status" value="1"/>
</dbReference>
<dbReference type="FunFam" id="3.30.360.10:FF:000001">
    <property type="entry name" value="Glyceraldehyde-3-phosphate dehydrogenase"/>
    <property type="match status" value="1"/>
</dbReference>
<dbReference type="FunFam" id="3.40.50.720:FF:000020">
    <property type="entry name" value="Glyceraldehyde-3-phosphate dehydrogenase"/>
    <property type="match status" value="1"/>
</dbReference>
<dbReference type="Gene3D" id="3.30.360.10">
    <property type="entry name" value="Dihydrodipicolinate Reductase, domain 2"/>
    <property type="match status" value="1"/>
</dbReference>
<dbReference type="Gene3D" id="3.40.50.720">
    <property type="entry name" value="NAD(P)-binding Rossmann-like Domain"/>
    <property type="match status" value="1"/>
</dbReference>
<dbReference type="InterPro" id="IPR020831">
    <property type="entry name" value="GlycerAld/Erythrose_P_DH"/>
</dbReference>
<dbReference type="InterPro" id="IPR020830">
    <property type="entry name" value="GlycerAld_3-P_DH_AS"/>
</dbReference>
<dbReference type="InterPro" id="IPR020829">
    <property type="entry name" value="GlycerAld_3-P_DH_cat"/>
</dbReference>
<dbReference type="InterPro" id="IPR020828">
    <property type="entry name" value="GlycerAld_3-P_DH_NAD(P)-bd"/>
</dbReference>
<dbReference type="InterPro" id="IPR006424">
    <property type="entry name" value="Glyceraldehyde-3-P_DH_1"/>
</dbReference>
<dbReference type="InterPro" id="IPR036291">
    <property type="entry name" value="NAD(P)-bd_dom_sf"/>
</dbReference>
<dbReference type="NCBIfam" id="TIGR01534">
    <property type="entry name" value="GAPDH-I"/>
    <property type="match status" value="1"/>
</dbReference>
<dbReference type="PANTHER" id="PTHR10836">
    <property type="entry name" value="GLYCERALDEHYDE 3-PHOSPHATE DEHYDROGENASE"/>
    <property type="match status" value="1"/>
</dbReference>
<dbReference type="PANTHER" id="PTHR10836:SF112">
    <property type="entry name" value="GLYCERALDEHYDE-3-PHOSPHATE DEHYDROGENASE GAPC1, CYTOSOLIC-RELATED"/>
    <property type="match status" value="1"/>
</dbReference>
<dbReference type="Pfam" id="PF02800">
    <property type="entry name" value="Gp_dh_C"/>
    <property type="match status" value="1"/>
</dbReference>
<dbReference type="Pfam" id="PF00044">
    <property type="entry name" value="Gp_dh_N"/>
    <property type="match status" value="1"/>
</dbReference>
<dbReference type="PIRSF" id="PIRSF000149">
    <property type="entry name" value="GAP_DH"/>
    <property type="match status" value="1"/>
</dbReference>
<dbReference type="PRINTS" id="PR00078">
    <property type="entry name" value="G3PDHDRGNASE"/>
</dbReference>
<dbReference type="SMART" id="SM00846">
    <property type="entry name" value="Gp_dh_N"/>
    <property type="match status" value="1"/>
</dbReference>
<dbReference type="SUPFAM" id="SSF55347">
    <property type="entry name" value="Glyceraldehyde-3-phosphate dehydrogenase-like, C-terminal domain"/>
    <property type="match status" value="1"/>
</dbReference>
<dbReference type="SUPFAM" id="SSF51735">
    <property type="entry name" value="NAD(P)-binding Rossmann-fold domains"/>
    <property type="match status" value="1"/>
</dbReference>
<dbReference type="PROSITE" id="PS00071">
    <property type="entry name" value="GAPDH"/>
    <property type="match status" value="1"/>
</dbReference>
<proteinExistence type="evidence at transcript level"/>
<keyword id="KW-0963">Cytoplasm</keyword>
<keyword id="KW-0324">Glycolysis</keyword>
<keyword id="KW-0520">NAD</keyword>
<keyword id="KW-0560">Oxidoreductase</keyword>
<keyword id="KW-1185">Reference proteome</keyword>